<keyword id="KW-0445">Lipid transport</keyword>
<keyword id="KW-1185">Reference proteome</keyword>
<keyword id="KW-0964">Secreted</keyword>
<keyword id="KW-0732">Signal</keyword>
<keyword id="KW-0813">Transport</keyword>
<keyword id="KW-0850">VLDL</keyword>
<protein>
    <recommendedName>
        <fullName>Apolipoprotein C-I</fullName>
        <shortName>Apo-CI</shortName>
        <shortName>ApoC-I</shortName>
    </recommendedName>
    <alternativeName>
        <fullName>Apolipoprotein C1</fullName>
    </alternativeName>
    <component>
        <recommendedName>
            <fullName>Truncated apolipoprotein C-I</fullName>
        </recommendedName>
    </component>
</protein>
<organism>
    <name type="scientific">Panthera tigris altaica</name>
    <name type="common">Siberian tiger</name>
    <dbReference type="NCBI Taxonomy" id="74533"/>
    <lineage>
        <taxon>Eukaryota</taxon>
        <taxon>Metazoa</taxon>
        <taxon>Chordata</taxon>
        <taxon>Craniata</taxon>
        <taxon>Vertebrata</taxon>
        <taxon>Euteleostomi</taxon>
        <taxon>Mammalia</taxon>
        <taxon>Eutheria</taxon>
        <taxon>Laurasiatheria</taxon>
        <taxon>Carnivora</taxon>
        <taxon>Feliformia</taxon>
        <taxon>Felidae</taxon>
        <taxon>Pantherinae</taxon>
        <taxon>Panthera</taxon>
    </lineage>
</organism>
<accession>P0DM84</accession>
<dbReference type="EMBL" id="ATCQ01140317">
    <property type="status" value="NOT_ANNOTATED_CDS"/>
    <property type="molecule type" value="Genomic_DNA"/>
</dbReference>
<dbReference type="RefSeq" id="XP_007096579.1">
    <property type="nucleotide sequence ID" value="XM_007096517.2"/>
</dbReference>
<dbReference type="SMR" id="P0DM84"/>
<dbReference type="Ensembl" id="ENSPTIT00000028839.1">
    <property type="protein sequence ID" value="ENSPTIP00000024361.1"/>
    <property type="gene ID" value="ENSPTIG00000020485.1"/>
</dbReference>
<dbReference type="GeneID" id="102972544"/>
<dbReference type="KEGG" id="ptg:102972544"/>
<dbReference type="CTD" id="341"/>
<dbReference type="GeneTree" id="ENSGT01050000247924"/>
<dbReference type="Proteomes" id="UP000675900">
    <property type="component" value="Unassembled WGS sequence"/>
</dbReference>
<dbReference type="GO" id="GO:0034364">
    <property type="term" value="C:high-density lipoprotein particle"/>
    <property type="evidence" value="ECO:0007669"/>
    <property type="project" value="TreeGrafter"/>
</dbReference>
<dbReference type="GO" id="GO:0034361">
    <property type="term" value="C:very-low-density lipoprotein particle"/>
    <property type="evidence" value="ECO:0007669"/>
    <property type="project" value="UniProtKB-KW"/>
</dbReference>
<dbReference type="GO" id="GO:0005504">
    <property type="term" value="F:fatty acid binding"/>
    <property type="evidence" value="ECO:0007669"/>
    <property type="project" value="TreeGrafter"/>
</dbReference>
<dbReference type="GO" id="GO:0004859">
    <property type="term" value="F:phospholipase inhibitor activity"/>
    <property type="evidence" value="ECO:0007669"/>
    <property type="project" value="TreeGrafter"/>
</dbReference>
<dbReference type="GO" id="GO:0006869">
    <property type="term" value="P:lipid transport"/>
    <property type="evidence" value="ECO:0007669"/>
    <property type="project" value="UniProtKB-KW"/>
</dbReference>
<dbReference type="GO" id="GO:0042157">
    <property type="term" value="P:lipoprotein metabolic process"/>
    <property type="evidence" value="ECO:0007669"/>
    <property type="project" value="InterPro"/>
</dbReference>
<dbReference type="GO" id="GO:0032375">
    <property type="term" value="P:negative regulation of cholesterol transport"/>
    <property type="evidence" value="ECO:0007669"/>
    <property type="project" value="TreeGrafter"/>
</dbReference>
<dbReference type="GO" id="GO:0050995">
    <property type="term" value="P:negative regulation of lipid catabolic process"/>
    <property type="evidence" value="ECO:0007669"/>
    <property type="project" value="TreeGrafter"/>
</dbReference>
<dbReference type="GO" id="GO:0010916">
    <property type="term" value="P:negative regulation of very-low-density lipoprotein particle clearance"/>
    <property type="evidence" value="ECO:0007669"/>
    <property type="project" value="TreeGrafter"/>
</dbReference>
<dbReference type="GO" id="GO:0006641">
    <property type="term" value="P:triglyceride metabolic process"/>
    <property type="evidence" value="ECO:0007669"/>
    <property type="project" value="TreeGrafter"/>
</dbReference>
<dbReference type="GO" id="GO:0034447">
    <property type="term" value="P:very-low-density lipoprotein particle clearance"/>
    <property type="evidence" value="ECO:0007669"/>
    <property type="project" value="TreeGrafter"/>
</dbReference>
<dbReference type="InterPro" id="IPR006781">
    <property type="entry name" value="ApoC-I"/>
</dbReference>
<dbReference type="PANTHER" id="PTHR16565">
    <property type="entry name" value="APOLIPOPROTEIN C-I"/>
    <property type="match status" value="1"/>
</dbReference>
<dbReference type="PANTHER" id="PTHR16565:SF2">
    <property type="entry name" value="APOLIPOPROTEIN C-I"/>
    <property type="match status" value="1"/>
</dbReference>
<proteinExistence type="inferred from homology"/>
<feature type="signal peptide" evidence="1">
    <location>
        <begin position="1"/>
        <end position="26"/>
    </location>
</feature>
<feature type="chain" id="PRO_0000424552" description="Apolipoprotein C-I">
    <location>
        <begin position="27"/>
        <end position="78"/>
    </location>
</feature>
<feature type="chain" id="PRO_0000424553" description="Truncated apolipoprotein C-I" evidence="4">
    <location>
        <begin position="29"/>
        <end position="78"/>
    </location>
</feature>
<gene>
    <name type="primary">APOC1</name>
</gene>
<sequence>MRLILWLPVLVVVLLMVTEGPAPAQGAPDVASTFRNIPNSLKEFGNNLKDTFESIPEATRKLMTSFAERLKNFRIPLL</sequence>
<name>APOC1_PANTA</name>
<comment type="function">
    <text evidence="2 3">Inhibitor of lipoprotein binding to the low density lipoprotein (LDL) receptor, LDL receptor-related protein, and very low density lipoprotein (VLDL) receptor. Associates with high density lipoproteins (HDL) and the triacylglycerol-rich lipoproteins in the plasma and makes up about 10% of the protein of the VLDL and 2% of that of HDL. Appears to interfere directly with fatty acid uptake and is also the major plasma inhibitor of cholesteryl ester transfer protein (CETP). Binds free fatty acids and reduces their intracellular esterification. Modulates the interaction of APOE with beta-migrating VLDL and inhibits binding of beta-VLDL to the LDL receptor-related protein.</text>
</comment>
<comment type="subcellular location">
    <subcellularLocation>
        <location evidence="2">Secreted</location>
    </subcellularLocation>
</comment>
<comment type="similarity">
    <text evidence="5">Belongs to the apolipoprotein C1 family.</text>
</comment>
<reference key="1">
    <citation type="journal article" date="2013" name="Nat. Commun.">
        <title>The tiger genome and comparative analysis with lion and snow leopard genomes.</title>
        <authorList>
            <person name="Cho Y.S."/>
            <person name="Hu L."/>
            <person name="Hou H."/>
            <person name="Lee H."/>
            <person name="Xu J."/>
            <person name="Kwon S."/>
            <person name="Oh S."/>
            <person name="Kim H.M."/>
            <person name="Jho S."/>
            <person name="Kim S."/>
            <person name="Shin Y.A."/>
            <person name="Kim B.C."/>
            <person name="Kim H."/>
            <person name="Kim C.U."/>
            <person name="Luo S.J."/>
            <person name="Johnson W.E."/>
            <person name="Koepfli K.P."/>
            <person name="Schmidt-Kuntzel A."/>
            <person name="Turner J.A."/>
            <person name="Marker L."/>
            <person name="Harper C."/>
            <person name="Miller S.M."/>
            <person name="Jacobs W."/>
            <person name="Bertola L.D."/>
            <person name="Kim T.H."/>
            <person name="Lee S."/>
            <person name="Zhou Q."/>
            <person name="Jung H.J."/>
            <person name="Xu X."/>
            <person name="Gadhvi P."/>
            <person name="Xu P."/>
            <person name="Xiong Y."/>
            <person name="Luo Y."/>
            <person name="Pan S."/>
            <person name="Gou C."/>
            <person name="Chu X."/>
            <person name="Zhang J."/>
            <person name="Liu S."/>
            <person name="He J."/>
            <person name="Chen Y."/>
            <person name="Yang L."/>
            <person name="Yang Y."/>
            <person name="He J."/>
            <person name="Liu S."/>
            <person name="Wang J."/>
            <person name="Kim C.H."/>
            <person name="Kwak H."/>
            <person name="Kim J.S."/>
            <person name="Hwang S."/>
            <person name="Ko J."/>
            <person name="Kim C.B."/>
            <person name="Kim S."/>
            <person name="Bayarlkhagva D."/>
            <person name="Paek W.K."/>
            <person name="Kim S.J."/>
            <person name="O'Brien S.J."/>
            <person name="Wang J."/>
            <person name="Bhak J."/>
        </authorList>
    </citation>
    <scope>NUCLEOTIDE SEQUENCE [LARGE SCALE GENOMIC DNA]</scope>
</reference>
<reference key="2">
    <citation type="unpublished observations" date="2013-10">
        <authorList>
            <person name="Puppione D.L."/>
        </authorList>
    </citation>
    <scope>IDENTIFICATION</scope>
</reference>
<evidence type="ECO:0000250" key="1"/>
<evidence type="ECO:0000250" key="2">
    <source>
        <dbReference type="UniProtKB" id="P02654"/>
    </source>
</evidence>
<evidence type="ECO:0000250" key="3">
    <source>
        <dbReference type="UniProtKB" id="P33047"/>
    </source>
</evidence>
<evidence type="ECO:0000250" key="4">
    <source>
        <dbReference type="UniProtKB" id="P86336"/>
    </source>
</evidence>
<evidence type="ECO:0000305" key="5"/>